<dbReference type="EC" id="3.6.4.13" evidence="7"/>
<dbReference type="EMBL" id="AB010259">
    <property type="protein sequence ID" value="BAA28347.1"/>
    <property type="molecule type" value="mRNA"/>
</dbReference>
<dbReference type="EMBL" id="AC009325">
    <property type="protein sequence ID" value="AAF01539.1"/>
    <property type="molecule type" value="Genomic_DNA"/>
</dbReference>
<dbReference type="EMBL" id="CP002686">
    <property type="protein sequence ID" value="AEE73683.1"/>
    <property type="molecule type" value="Genomic_DNA"/>
</dbReference>
<dbReference type="EMBL" id="CP002686">
    <property type="protein sequence ID" value="AEE73684.1"/>
    <property type="molecule type" value="Genomic_DNA"/>
</dbReference>
<dbReference type="EMBL" id="CP002686">
    <property type="protein sequence ID" value="AEE73685.1"/>
    <property type="molecule type" value="Genomic_DNA"/>
</dbReference>
<dbReference type="EMBL" id="CP002686">
    <property type="protein sequence ID" value="AEE73686.1"/>
    <property type="molecule type" value="Genomic_DNA"/>
</dbReference>
<dbReference type="EMBL" id="AY062591">
    <property type="protein sequence ID" value="AAL32669.1"/>
    <property type="molecule type" value="mRNA"/>
</dbReference>
<dbReference type="EMBL" id="AF428313">
    <property type="protein sequence ID" value="AAL16243.1"/>
    <property type="molecule type" value="mRNA"/>
</dbReference>
<dbReference type="EMBL" id="AY050375">
    <property type="protein sequence ID" value="AAK91393.1"/>
    <property type="molecule type" value="mRNA"/>
</dbReference>
<dbReference type="EMBL" id="BT000795">
    <property type="protein sequence ID" value="AAN31934.1"/>
    <property type="molecule type" value="mRNA"/>
</dbReference>
<dbReference type="EMBL" id="BT009670">
    <property type="protein sequence ID" value="AAP78938.1"/>
    <property type="molecule type" value="mRNA"/>
</dbReference>
<dbReference type="PIR" id="T52137">
    <property type="entry name" value="T52137"/>
</dbReference>
<dbReference type="RefSeq" id="NP_001030619.1">
    <molecule id="Q8H136-1"/>
    <property type="nucleotide sequence ID" value="NM_001035542.1"/>
</dbReference>
<dbReference type="RefSeq" id="NP_566141.1">
    <molecule id="Q8H136-2"/>
    <property type="nucleotide sequence ID" value="NM_111020.3"/>
</dbReference>
<dbReference type="RefSeq" id="NP_850492.1">
    <molecule id="Q8H136-1"/>
    <property type="nucleotide sequence ID" value="NM_180161.2"/>
</dbReference>
<dbReference type="RefSeq" id="NP_974206.1">
    <molecule id="Q8H136-1"/>
    <property type="nucleotide sequence ID" value="NM_202477.2"/>
</dbReference>
<dbReference type="SMR" id="Q8H136"/>
<dbReference type="BioGRID" id="6449">
    <property type="interactions" value="5"/>
</dbReference>
<dbReference type="FunCoup" id="Q8H136">
    <property type="interactions" value="534"/>
</dbReference>
<dbReference type="IntAct" id="Q8H136">
    <property type="interactions" value="1"/>
</dbReference>
<dbReference type="STRING" id="3702.Q8H136"/>
<dbReference type="GlyGen" id="Q8H136">
    <property type="glycosylation" value="1 site"/>
</dbReference>
<dbReference type="iPTMnet" id="Q8H136"/>
<dbReference type="PaxDb" id="3702-AT3G01540.2"/>
<dbReference type="ProteomicsDB" id="236909">
    <molecule id="Q8H136-1"/>
</dbReference>
<dbReference type="EnsemblPlants" id="AT3G01540.1">
    <molecule id="Q8H136-2"/>
    <property type="protein sequence ID" value="AT3G01540.1"/>
    <property type="gene ID" value="AT3G01540"/>
</dbReference>
<dbReference type="EnsemblPlants" id="AT3G01540.2">
    <molecule id="Q8H136-1"/>
    <property type="protein sequence ID" value="AT3G01540.2"/>
    <property type="gene ID" value="AT3G01540"/>
</dbReference>
<dbReference type="EnsemblPlants" id="AT3G01540.3">
    <molecule id="Q8H136-1"/>
    <property type="protein sequence ID" value="AT3G01540.3"/>
    <property type="gene ID" value="AT3G01540"/>
</dbReference>
<dbReference type="EnsemblPlants" id="AT3G01540.4">
    <molecule id="Q8H136-1"/>
    <property type="protein sequence ID" value="AT3G01540.4"/>
    <property type="gene ID" value="AT3G01540"/>
</dbReference>
<dbReference type="GeneID" id="821116"/>
<dbReference type="Gramene" id="AT3G01540.1">
    <molecule id="Q8H136-2"/>
    <property type="protein sequence ID" value="AT3G01540.1"/>
    <property type="gene ID" value="AT3G01540"/>
</dbReference>
<dbReference type="Gramene" id="AT3G01540.2">
    <molecule id="Q8H136-1"/>
    <property type="protein sequence ID" value="AT3G01540.2"/>
    <property type="gene ID" value="AT3G01540"/>
</dbReference>
<dbReference type="Gramene" id="AT3G01540.3">
    <molecule id="Q8H136-1"/>
    <property type="protein sequence ID" value="AT3G01540.3"/>
    <property type="gene ID" value="AT3G01540"/>
</dbReference>
<dbReference type="Gramene" id="AT3G01540.4">
    <molecule id="Q8H136-1"/>
    <property type="protein sequence ID" value="AT3G01540.4"/>
    <property type="gene ID" value="AT3G01540"/>
</dbReference>
<dbReference type="KEGG" id="ath:AT3G01540"/>
<dbReference type="Araport" id="AT3G01540"/>
<dbReference type="TAIR" id="AT3G01540">
    <property type="gene designation" value="DRH1"/>
</dbReference>
<dbReference type="eggNOG" id="KOG0331">
    <property type="taxonomic scope" value="Eukaryota"/>
</dbReference>
<dbReference type="InParanoid" id="Q8H136"/>
<dbReference type="OMA" id="IMHIRAR"/>
<dbReference type="PhylomeDB" id="Q8H136"/>
<dbReference type="CD-CODE" id="4299E36E">
    <property type="entry name" value="Nucleolus"/>
</dbReference>
<dbReference type="PRO" id="PR:Q8H136"/>
<dbReference type="Proteomes" id="UP000006548">
    <property type="component" value="Chromosome 3"/>
</dbReference>
<dbReference type="ExpressionAtlas" id="Q8H136">
    <property type="expression patterns" value="baseline and differential"/>
</dbReference>
<dbReference type="GO" id="GO:0005730">
    <property type="term" value="C:nucleolus"/>
    <property type="evidence" value="ECO:0000314"/>
    <property type="project" value="TAIR"/>
</dbReference>
<dbReference type="GO" id="GO:0005634">
    <property type="term" value="C:nucleus"/>
    <property type="evidence" value="ECO:0000314"/>
    <property type="project" value="TAIR"/>
</dbReference>
<dbReference type="GO" id="GO:0005524">
    <property type="term" value="F:ATP binding"/>
    <property type="evidence" value="ECO:0007669"/>
    <property type="project" value="UniProtKB-KW"/>
</dbReference>
<dbReference type="GO" id="GO:0016887">
    <property type="term" value="F:ATP hydrolysis activity"/>
    <property type="evidence" value="ECO:0000314"/>
    <property type="project" value="TAIR"/>
</dbReference>
<dbReference type="GO" id="GO:0003723">
    <property type="term" value="F:RNA binding"/>
    <property type="evidence" value="ECO:0007669"/>
    <property type="project" value="UniProtKB-KW"/>
</dbReference>
<dbReference type="GO" id="GO:0003724">
    <property type="term" value="F:RNA helicase activity"/>
    <property type="evidence" value="ECO:0000314"/>
    <property type="project" value="TAIR"/>
</dbReference>
<dbReference type="GO" id="GO:0000184">
    <property type="term" value="P:nuclear-transcribed mRNA catabolic process, nonsense-mediated decay"/>
    <property type="evidence" value="ECO:0007669"/>
    <property type="project" value="UniProtKB-KW"/>
</dbReference>
<dbReference type="GO" id="GO:0006364">
    <property type="term" value="P:rRNA processing"/>
    <property type="evidence" value="ECO:0000315"/>
    <property type="project" value="TAIR"/>
</dbReference>
<dbReference type="CDD" id="cd18787">
    <property type="entry name" value="SF2_C_DEAD"/>
    <property type="match status" value="1"/>
</dbReference>
<dbReference type="CDD" id="cd00201">
    <property type="entry name" value="WW"/>
    <property type="match status" value="1"/>
</dbReference>
<dbReference type="FunFam" id="3.40.50.300:FF:000008">
    <property type="entry name" value="ATP-dependent RNA helicase RhlB"/>
    <property type="match status" value="1"/>
</dbReference>
<dbReference type="FunFam" id="3.40.50.300:FF:000079">
    <property type="entry name" value="probable ATP-dependent RNA helicase DDX17"/>
    <property type="match status" value="1"/>
</dbReference>
<dbReference type="Gene3D" id="2.20.70.10">
    <property type="match status" value="1"/>
</dbReference>
<dbReference type="Gene3D" id="3.40.50.300">
    <property type="entry name" value="P-loop containing nucleotide triphosphate hydrolases"/>
    <property type="match status" value="2"/>
</dbReference>
<dbReference type="InterPro" id="IPR011545">
    <property type="entry name" value="DEAD/DEAH_box_helicase_dom"/>
</dbReference>
<dbReference type="InterPro" id="IPR014001">
    <property type="entry name" value="Helicase_ATP-bd"/>
</dbReference>
<dbReference type="InterPro" id="IPR001650">
    <property type="entry name" value="Helicase_C-like"/>
</dbReference>
<dbReference type="InterPro" id="IPR027417">
    <property type="entry name" value="P-loop_NTPase"/>
</dbReference>
<dbReference type="InterPro" id="IPR000629">
    <property type="entry name" value="RNA-helicase_DEAD-box_CS"/>
</dbReference>
<dbReference type="InterPro" id="IPR014014">
    <property type="entry name" value="RNA_helicase_DEAD_Q_motif"/>
</dbReference>
<dbReference type="InterPro" id="IPR001202">
    <property type="entry name" value="WW_dom"/>
</dbReference>
<dbReference type="InterPro" id="IPR036020">
    <property type="entry name" value="WW_dom_sf"/>
</dbReference>
<dbReference type="PANTHER" id="PTHR47958">
    <property type="entry name" value="ATP-DEPENDENT RNA HELICASE DBP3"/>
    <property type="match status" value="1"/>
</dbReference>
<dbReference type="Pfam" id="PF00270">
    <property type="entry name" value="DEAD"/>
    <property type="match status" value="1"/>
</dbReference>
<dbReference type="Pfam" id="PF00271">
    <property type="entry name" value="Helicase_C"/>
    <property type="match status" value="1"/>
</dbReference>
<dbReference type="Pfam" id="PF00397">
    <property type="entry name" value="WW"/>
    <property type="match status" value="1"/>
</dbReference>
<dbReference type="SMART" id="SM00487">
    <property type="entry name" value="DEXDc"/>
    <property type="match status" value="1"/>
</dbReference>
<dbReference type="SMART" id="SM00490">
    <property type="entry name" value="HELICc"/>
    <property type="match status" value="1"/>
</dbReference>
<dbReference type="SMART" id="SM00456">
    <property type="entry name" value="WW"/>
    <property type="match status" value="1"/>
</dbReference>
<dbReference type="SUPFAM" id="SSF52540">
    <property type="entry name" value="P-loop containing nucleoside triphosphate hydrolases"/>
    <property type="match status" value="1"/>
</dbReference>
<dbReference type="SUPFAM" id="SSF51045">
    <property type="entry name" value="WW domain"/>
    <property type="match status" value="1"/>
</dbReference>
<dbReference type="PROSITE" id="PS00039">
    <property type="entry name" value="DEAD_ATP_HELICASE"/>
    <property type="match status" value="1"/>
</dbReference>
<dbReference type="PROSITE" id="PS51192">
    <property type="entry name" value="HELICASE_ATP_BIND_1"/>
    <property type="match status" value="1"/>
</dbReference>
<dbReference type="PROSITE" id="PS51194">
    <property type="entry name" value="HELICASE_CTER"/>
    <property type="match status" value="1"/>
</dbReference>
<dbReference type="PROSITE" id="PS51195">
    <property type="entry name" value="Q_MOTIF"/>
    <property type="match status" value="1"/>
</dbReference>
<dbReference type="PROSITE" id="PS01159">
    <property type="entry name" value="WW_DOMAIN_1"/>
    <property type="match status" value="1"/>
</dbReference>
<dbReference type="PROSITE" id="PS50020">
    <property type="entry name" value="WW_DOMAIN_2"/>
    <property type="match status" value="1"/>
</dbReference>
<comment type="function">
    <text evidence="10">ATP-dependent RNA helicase involved nonsense-mediated mRNA decay and ribosome biogenesis through rRNA processing.</text>
</comment>
<comment type="catalytic activity">
    <reaction evidence="7">
        <text>ATP + H2O = ADP + phosphate + H(+)</text>
        <dbReference type="Rhea" id="RHEA:13065"/>
        <dbReference type="ChEBI" id="CHEBI:15377"/>
        <dbReference type="ChEBI" id="CHEBI:15378"/>
        <dbReference type="ChEBI" id="CHEBI:30616"/>
        <dbReference type="ChEBI" id="CHEBI:43474"/>
        <dbReference type="ChEBI" id="CHEBI:456216"/>
        <dbReference type="EC" id="3.6.4.13"/>
    </reaction>
    <physiologicalReaction direction="left-to-right" evidence="10">
        <dbReference type="Rhea" id="RHEA:13066"/>
    </physiologicalReaction>
</comment>
<comment type="subcellular location">
    <subcellularLocation>
        <location evidence="6">Nucleus</location>
    </subcellularLocation>
</comment>
<comment type="alternative products">
    <event type="alternative splicing"/>
    <isoform>
        <id>Q8H136-1</id>
        <name>1</name>
        <sequence type="displayed"/>
    </isoform>
    <isoform>
        <id>Q8H136-2</id>
        <name>2</name>
        <sequence type="described" ref="VSP_019098"/>
    </isoform>
</comment>
<comment type="tissue specificity">
    <text evidence="5 7">Ubiquitous. Preferentially expressed in flowers and roots.</text>
</comment>
<comment type="induction">
    <text evidence="7">Down-regulated by abscisic acid (ABA), salt and cold treatments.</text>
</comment>
<comment type="domain">
    <text>The Q motif is unique to and characteristic of the DEAD box family of RNA helicases and controls ATP binding and hydrolysis.</text>
</comment>
<comment type="miscellaneous">
    <molecule>Isoform 2</molecule>
    <text evidence="9">May be due to a competing acceptor splice site.</text>
</comment>
<comment type="similarity">
    <text evidence="9">Belongs to the DEAD box helicase family. DDX5/DBP2 subfamily.</text>
</comment>
<keyword id="KW-0007">Acetylation</keyword>
<keyword id="KW-0025">Alternative splicing</keyword>
<keyword id="KW-0067">ATP-binding</keyword>
<keyword id="KW-0347">Helicase</keyword>
<keyword id="KW-0378">Hydrolase</keyword>
<keyword id="KW-0866">Nonsense-mediated mRNA decay</keyword>
<keyword id="KW-0547">Nucleotide-binding</keyword>
<keyword id="KW-0539">Nucleus</keyword>
<keyword id="KW-0597">Phosphoprotein</keyword>
<keyword id="KW-1185">Reference proteome</keyword>
<keyword id="KW-0690">Ribosome biogenesis</keyword>
<keyword id="KW-0694">RNA-binding</keyword>
<keyword id="KW-0698">rRNA processing</keyword>
<evidence type="ECO:0000255" key="1">
    <source>
        <dbReference type="PROSITE-ProRule" id="PRU00224"/>
    </source>
</evidence>
<evidence type="ECO:0000255" key="2">
    <source>
        <dbReference type="PROSITE-ProRule" id="PRU00541"/>
    </source>
</evidence>
<evidence type="ECO:0000255" key="3">
    <source>
        <dbReference type="PROSITE-ProRule" id="PRU00542"/>
    </source>
</evidence>
<evidence type="ECO:0000256" key="4">
    <source>
        <dbReference type="SAM" id="MobiDB-lite"/>
    </source>
</evidence>
<evidence type="ECO:0000269" key="5">
    <source>
    </source>
</evidence>
<evidence type="ECO:0000269" key="6">
    <source>
    </source>
</evidence>
<evidence type="ECO:0000269" key="7">
    <source>
    </source>
</evidence>
<evidence type="ECO:0000303" key="8">
    <source>
    </source>
</evidence>
<evidence type="ECO:0000305" key="9"/>
<evidence type="ECO:0000305" key="10">
    <source>
    </source>
</evidence>
<evidence type="ECO:0007744" key="11">
    <source>
    </source>
</evidence>
<evidence type="ECO:0007744" key="12">
    <source>
    </source>
</evidence>
<sequence length="619" mass="67728">MAATAAASVVRYAPEDHTLPKPWKGLIDDRTGYLYFWNPETNVTQYEKPTPSLPPKFSPAVSVSSSVQVQQTDAYAPPKDDDKYSRGSERVSRFSEGGRSGPPYSNGAANGVGDSAYGAASTRVPLPSSAPASELSPEAYSRRHEITVSGGQVPPPLMSFEATGFPPELLREVLSAGFSAPTPIQAQSWPIAMQGRDIVAIAKTGSGKTLGYLIPGFLHLQRIRNDSRMGPTILVLSPTRELATQIQEEAVKFGRSSRISCTCLYGGAPKGPQLRDLERGADIVVATPGRLNDILEMRRISLRQISYLVLDEADRMLDMGFEPQIRKIVKEIPTKRQTLMYTATWPKGVRKIAADLLVNPAQVNIGNVDELVANKSITQHIEVVAPMEKQRRLEQILRSQEPGSKVIIFCSTKRMCDQLTRNLTRQFGAAAIHGDKSQPERDNVLNQFRSGRTPVLVATDVAARGLDVKDIRAVVNYDFPNGVEDYVHRIGRTGRAGATGQAFTFFGDQDSKHASDLIKILEGANQRVPPQIREMATRGGGGMNKFSRWGPPSGGRGRGGDSGYGGRGSFASRDSRSSNGWGRERERSRSPERFNRAPPPSSTGSPPRSFHETMMMKHR</sequence>
<organism>
    <name type="scientific">Arabidopsis thaliana</name>
    <name type="common">Mouse-ear cress</name>
    <dbReference type="NCBI Taxonomy" id="3702"/>
    <lineage>
        <taxon>Eukaryota</taxon>
        <taxon>Viridiplantae</taxon>
        <taxon>Streptophyta</taxon>
        <taxon>Embryophyta</taxon>
        <taxon>Tracheophyta</taxon>
        <taxon>Spermatophyta</taxon>
        <taxon>Magnoliopsida</taxon>
        <taxon>eudicotyledons</taxon>
        <taxon>Gunneridae</taxon>
        <taxon>Pentapetalae</taxon>
        <taxon>rosids</taxon>
        <taxon>malvids</taxon>
        <taxon>Brassicales</taxon>
        <taxon>Brassicaceae</taxon>
        <taxon>Camelineae</taxon>
        <taxon>Arabidopsis</taxon>
    </lineage>
</organism>
<reference key="1">
    <citation type="journal article" date="1998" name="Nucleic Acids Res.">
        <title>Characterization of a DEAD box ATPase/RNA helicase protein of Arabidopsis thaliana.</title>
        <authorList>
            <person name="Okanami M."/>
            <person name="Meshi T."/>
            <person name="Iwabuchi M."/>
        </authorList>
    </citation>
    <scope>NUCLEOTIDE SEQUENCE [MRNA] (ISOFORM 1)</scope>
    <scope>FUNCTION</scope>
    <scope>CATALYTIC ACTIVITY</scope>
    <scope>TISSUE SPECIFICITY</scope>
    <scope>INDUCTION</scope>
</reference>
<reference key="2">
    <citation type="journal article" date="2000" name="Nature">
        <title>Sequence and analysis of chromosome 3 of the plant Arabidopsis thaliana.</title>
        <authorList>
            <person name="Salanoubat M."/>
            <person name="Lemcke K."/>
            <person name="Rieger M."/>
            <person name="Ansorge W."/>
            <person name="Unseld M."/>
            <person name="Fartmann B."/>
            <person name="Valle G."/>
            <person name="Bloecker H."/>
            <person name="Perez-Alonso M."/>
            <person name="Obermaier B."/>
            <person name="Delseny M."/>
            <person name="Boutry M."/>
            <person name="Grivell L.A."/>
            <person name="Mache R."/>
            <person name="Puigdomenech P."/>
            <person name="De Simone V."/>
            <person name="Choisne N."/>
            <person name="Artiguenave F."/>
            <person name="Robert C."/>
            <person name="Brottier P."/>
            <person name="Wincker P."/>
            <person name="Cattolico L."/>
            <person name="Weissenbach J."/>
            <person name="Saurin W."/>
            <person name="Quetier F."/>
            <person name="Schaefer M."/>
            <person name="Mueller-Auer S."/>
            <person name="Gabel C."/>
            <person name="Fuchs M."/>
            <person name="Benes V."/>
            <person name="Wurmbach E."/>
            <person name="Drzonek H."/>
            <person name="Erfle H."/>
            <person name="Jordan N."/>
            <person name="Bangert S."/>
            <person name="Wiedelmann R."/>
            <person name="Kranz H."/>
            <person name="Voss H."/>
            <person name="Holland R."/>
            <person name="Brandt P."/>
            <person name="Nyakatura G."/>
            <person name="Vezzi A."/>
            <person name="D'Angelo M."/>
            <person name="Pallavicini A."/>
            <person name="Toppo S."/>
            <person name="Simionati B."/>
            <person name="Conrad A."/>
            <person name="Hornischer K."/>
            <person name="Kauer G."/>
            <person name="Loehnert T.-H."/>
            <person name="Nordsiek G."/>
            <person name="Reichelt J."/>
            <person name="Scharfe M."/>
            <person name="Schoen O."/>
            <person name="Bargues M."/>
            <person name="Terol J."/>
            <person name="Climent J."/>
            <person name="Navarro P."/>
            <person name="Collado C."/>
            <person name="Perez-Perez A."/>
            <person name="Ottenwaelder B."/>
            <person name="Duchemin D."/>
            <person name="Cooke R."/>
            <person name="Laudie M."/>
            <person name="Berger-Llauro C."/>
            <person name="Purnelle B."/>
            <person name="Masuy D."/>
            <person name="de Haan M."/>
            <person name="Maarse A.C."/>
            <person name="Alcaraz J.-P."/>
            <person name="Cottet A."/>
            <person name="Casacuberta E."/>
            <person name="Monfort A."/>
            <person name="Argiriou A."/>
            <person name="Flores M."/>
            <person name="Liguori R."/>
            <person name="Vitale D."/>
            <person name="Mannhaupt G."/>
            <person name="Haase D."/>
            <person name="Schoof H."/>
            <person name="Rudd S."/>
            <person name="Zaccaria P."/>
            <person name="Mewes H.-W."/>
            <person name="Mayer K.F.X."/>
            <person name="Kaul S."/>
            <person name="Town C.D."/>
            <person name="Koo H.L."/>
            <person name="Tallon L.J."/>
            <person name="Jenkins J."/>
            <person name="Rooney T."/>
            <person name="Rizzo M."/>
            <person name="Walts A."/>
            <person name="Utterback T."/>
            <person name="Fujii C.Y."/>
            <person name="Shea T.P."/>
            <person name="Creasy T.H."/>
            <person name="Haas B."/>
            <person name="Maiti R."/>
            <person name="Wu D."/>
            <person name="Peterson J."/>
            <person name="Van Aken S."/>
            <person name="Pai G."/>
            <person name="Militscher J."/>
            <person name="Sellers P."/>
            <person name="Gill J.E."/>
            <person name="Feldblyum T.V."/>
            <person name="Preuss D."/>
            <person name="Lin X."/>
            <person name="Nierman W.C."/>
            <person name="Salzberg S.L."/>
            <person name="White O."/>
            <person name="Venter J.C."/>
            <person name="Fraser C.M."/>
            <person name="Kaneko T."/>
            <person name="Nakamura Y."/>
            <person name="Sato S."/>
            <person name="Kato T."/>
            <person name="Asamizu E."/>
            <person name="Sasamoto S."/>
            <person name="Kimura T."/>
            <person name="Idesawa K."/>
            <person name="Kawashima K."/>
            <person name="Kishida Y."/>
            <person name="Kiyokawa C."/>
            <person name="Kohara M."/>
            <person name="Matsumoto M."/>
            <person name="Matsuno A."/>
            <person name="Muraki A."/>
            <person name="Nakayama S."/>
            <person name="Nakazaki N."/>
            <person name="Shinpo S."/>
            <person name="Takeuchi C."/>
            <person name="Wada T."/>
            <person name="Watanabe A."/>
            <person name="Yamada M."/>
            <person name="Yasuda M."/>
            <person name="Tabata S."/>
        </authorList>
    </citation>
    <scope>NUCLEOTIDE SEQUENCE [LARGE SCALE GENOMIC DNA]</scope>
    <source>
        <strain>cv. Columbia</strain>
    </source>
</reference>
<reference key="3">
    <citation type="journal article" date="2017" name="Plant J.">
        <title>Araport11: a complete reannotation of the Arabidopsis thaliana reference genome.</title>
        <authorList>
            <person name="Cheng C.Y."/>
            <person name="Krishnakumar V."/>
            <person name="Chan A.P."/>
            <person name="Thibaud-Nissen F."/>
            <person name="Schobel S."/>
            <person name="Town C.D."/>
        </authorList>
    </citation>
    <scope>GENOME REANNOTATION</scope>
    <source>
        <strain>cv. Columbia</strain>
    </source>
</reference>
<reference key="4">
    <citation type="journal article" date="2003" name="Science">
        <title>Empirical analysis of transcriptional activity in the Arabidopsis genome.</title>
        <authorList>
            <person name="Yamada K."/>
            <person name="Lim J."/>
            <person name="Dale J.M."/>
            <person name="Chen H."/>
            <person name="Shinn P."/>
            <person name="Palm C.J."/>
            <person name="Southwick A.M."/>
            <person name="Wu H.C."/>
            <person name="Kim C.J."/>
            <person name="Nguyen M."/>
            <person name="Pham P.K."/>
            <person name="Cheuk R.F."/>
            <person name="Karlin-Newmann G."/>
            <person name="Liu S.X."/>
            <person name="Lam B."/>
            <person name="Sakano H."/>
            <person name="Wu T."/>
            <person name="Yu G."/>
            <person name="Miranda M."/>
            <person name="Quach H.L."/>
            <person name="Tripp M."/>
            <person name="Chang C.H."/>
            <person name="Lee J.M."/>
            <person name="Toriumi M.J."/>
            <person name="Chan M.M."/>
            <person name="Tang C.C."/>
            <person name="Onodera C.S."/>
            <person name="Deng J.M."/>
            <person name="Akiyama K."/>
            <person name="Ansari Y."/>
            <person name="Arakawa T."/>
            <person name="Banh J."/>
            <person name="Banno F."/>
            <person name="Bowser L."/>
            <person name="Brooks S.Y."/>
            <person name="Carninci P."/>
            <person name="Chao Q."/>
            <person name="Choy N."/>
            <person name="Enju A."/>
            <person name="Goldsmith A.D."/>
            <person name="Gurjal M."/>
            <person name="Hansen N.F."/>
            <person name="Hayashizaki Y."/>
            <person name="Johnson-Hopson C."/>
            <person name="Hsuan V.W."/>
            <person name="Iida K."/>
            <person name="Karnes M."/>
            <person name="Khan S."/>
            <person name="Koesema E."/>
            <person name="Ishida J."/>
            <person name="Jiang P.X."/>
            <person name="Jones T."/>
            <person name="Kawai J."/>
            <person name="Kamiya A."/>
            <person name="Meyers C."/>
            <person name="Nakajima M."/>
            <person name="Narusaka M."/>
            <person name="Seki M."/>
            <person name="Sakurai T."/>
            <person name="Satou M."/>
            <person name="Tamse R."/>
            <person name="Vaysberg M."/>
            <person name="Wallender E.K."/>
            <person name="Wong C."/>
            <person name="Yamamura Y."/>
            <person name="Yuan S."/>
            <person name="Shinozaki K."/>
            <person name="Davis R.W."/>
            <person name="Theologis A."/>
            <person name="Ecker J.R."/>
        </authorList>
    </citation>
    <scope>NUCLEOTIDE SEQUENCE [LARGE SCALE MRNA] (ISOFORMS 1 AND 2)</scope>
    <source>
        <strain>cv. Columbia</strain>
    </source>
</reference>
<reference key="5">
    <citation type="journal article" date="2004" name="Plant Biotechnol. J.">
        <title>DEAD-box RNA helicases in Arabidopsis thaliana: establishing a link between quantitative expression, gene structure and evolution of a family of genes.</title>
        <authorList>
            <person name="Mingam A."/>
            <person name="Toffano-Nioche C."/>
            <person name="Brunaud V."/>
            <person name="Boudet N."/>
            <person name="Kreis M."/>
            <person name="Lecharny A."/>
        </authorList>
    </citation>
    <scope>GENE FAMILY</scope>
    <scope>NOMENCLATURE</scope>
    <scope>TISSUE SPECIFICITY</scope>
</reference>
<reference key="6">
    <citation type="journal article" date="2009" name="J. Proteomics">
        <title>Phosphoproteomic analysis of nuclei-enriched fractions from Arabidopsis thaliana.</title>
        <authorList>
            <person name="Jones A.M.E."/>
            <person name="MacLean D."/>
            <person name="Studholme D.J."/>
            <person name="Serna-Sanz A."/>
            <person name="Andreasson E."/>
            <person name="Rathjen J.P."/>
            <person name="Peck S.C."/>
        </authorList>
    </citation>
    <scope>SUBCELLULAR LOCATION</scope>
    <scope>PHOSPHORYLATION [LARGE SCALE ANALYSIS] AT SER-136</scope>
    <scope>IDENTIFICATION BY MASS SPECTROMETRY [LARGE SCALE ANALYSIS]</scope>
    <source>
        <strain>cv. Columbia</strain>
    </source>
</reference>
<reference key="7">
    <citation type="journal article" date="2009" name="Plant Physiol.">
        <title>Large-scale Arabidopsis phosphoproteome profiling reveals novel chloroplast kinase substrates and phosphorylation networks.</title>
        <authorList>
            <person name="Reiland S."/>
            <person name="Messerli G."/>
            <person name="Baerenfaller K."/>
            <person name="Gerrits B."/>
            <person name="Endler A."/>
            <person name="Grossmann J."/>
            <person name="Gruissem W."/>
            <person name="Baginsky S."/>
        </authorList>
    </citation>
    <scope>IDENTIFICATION BY MASS SPECTROMETRY [LARGE SCALE ANALYSIS]</scope>
</reference>
<reference key="8">
    <citation type="journal article" date="2012" name="Mol. Cell. Proteomics">
        <title>Comparative large-scale characterisation of plant vs. mammal proteins reveals similar and idiosyncratic N-alpha acetylation features.</title>
        <authorList>
            <person name="Bienvenut W.V."/>
            <person name="Sumpton D."/>
            <person name="Martinez A."/>
            <person name="Lilla S."/>
            <person name="Espagne C."/>
            <person name="Meinnel T."/>
            <person name="Giglione C."/>
        </authorList>
    </citation>
    <scope>ACETYLATION [LARGE SCALE ANALYSIS] AT ALA-2</scope>
    <scope>CLEAVAGE OF INITIATOR METHIONINE [LARGE SCALE ANALYSIS]</scope>
    <scope>IDENTIFICATION BY MASS SPECTROMETRY [LARGE SCALE ANALYSIS]</scope>
</reference>
<reference key="9">
    <citation type="journal article" date="2013" name="PLoS ONE">
        <title>Genome-wide comparative in silico analysis of the RNA helicase gene family in Zea mays and Glycine max: a comparison with Arabidopsis and Oryza sativa.</title>
        <authorList>
            <person name="Xu R."/>
            <person name="Zhang S."/>
            <person name="Huang J."/>
            <person name="Zheng C."/>
        </authorList>
    </citation>
    <scope>GENE FAMILY</scope>
</reference>
<name>RH14_ARATH</name>
<protein>
    <recommendedName>
        <fullName>DEAD-box ATP-dependent RNA helicase 14</fullName>
        <ecNumber evidence="7">3.6.4.13</ecNumber>
    </recommendedName>
</protein>
<proteinExistence type="evidence at protein level"/>
<accession>Q8H136</accession>
<accession>O64430</accession>
<accession>Q8W4F5</accession>
<accession>Q93WJ3</accession>
<gene>
    <name type="primary">RH14</name>
    <name type="synonym">DRH1</name>
    <name type="ordered locus">At3g01540</name>
    <name type="ORF">F4P13.9</name>
</gene>
<feature type="initiator methionine" description="Removed" evidence="12">
    <location>
        <position position="1"/>
    </location>
</feature>
<feature type="chain" id="PRO_0000239156" description="DEAD-box ATP-dependent RNA helicase 14">
    <location>
        <begin position="2"/>
        <end position="619"/>
    </location>
</feature>
<feature type="domain" description="WW" evidence="1">
    <location>
        <begin position="17"/>
        <end position="51"/>
    </location>
</feature>
<feature type="domain" description="Helicase ATP-binding" evidence="2">
    <location>
        <begin position="189"/>
        <end position="363"/>
    </location>
</feature>
<feature type="domain" description="Helicase C-terminal" evidence="3">
    <location>
        <begin position="392"/>
        <end position="536"/>
    </location>
</feature>
<feature type="region of interest" description="Disordered" evidence="4">
    <location>
        <begin position="47"/>
        <end position="139"/>
    </location>
</feature>
<feature type="region of interest" description="Disordered" evidence="4">
    <location>
        <begin position="528"/>
        <end position="619"/>
    </location>
</feature>
<feature type="short sequence motif" description="Q motif">
    <location>
        <begin position="158"/>
        <end position="186"/>
    </location>
</feature>
<feature type="short sequence motif" description="DEAD box">
    <location>
        <begin position="311"/>
        <end position="314"/>
    </location>
</feature>
<feature type="compositionally biased region" description="Low complexity" evidence="4">
    <location>
        <begin position="61"/>
        <end position="71"/>
    </location>
</feature>
<feature type="compositionally biased region" description="Basic and acidic residues" evidence="4">
    <location>
        <begin position="78"/>
        <end position="93"/>
    </location>
</feature>
<feature type="compositionally biased region" description="Low complexity" evidence="4">
    <location>
        <begin position="125"/>
        <end position="139"/>
    </location>
</feature>
<feature type="compositionally biased region" description="Gly residues" evidence="4">
    <location>
        <begin position="552"/>
        <end position="568"/>
    </location>
</feature>
<feature type="compositionally biased region" description="Basic and acidic residues" evidence="4">
    <location>
        <begin position="582"/>
        <end position="595"/>
    </location>
</feature>
<feature type="compositionally biased region" description="Basic and acidic residues" evidence="4">
    <location>
        <begin position="609"/>
        <end position="619"/>
    </location>
</feature>
<feature type="binding site" evidence="2">
    <location>
        <begin position="202"/>
        <end position="209"/>
    </location>
    <ligand>
        <name>ATP</name>
        <dbReference type="ChEBI" id="CHEBI:30616"/>
    </ligand>
</feature>
<feature type="modified residue" description="N-acetylalanine" evidence="12">
    <location>
        <position position="2"/>
    </location>
</feature>
<feature type="modified residue" description="Phosphoserine" evidence="11">
    <location>
        <position position="136"/>
    </location>
</feature>
<feature type="splice variant" id="VSP_019098" description="In isoform 2." evidence="8">
    <location>
        <position position="575"/>
    </location>
</feature>
<feature type="sequence conflict" description="In Ref. 4; AAL32669." evidence="9" ref="4">
    <original>R</original>
    <variation>K</variation>
    <location>
        <position position="587"/>
    </location>
</feature>